<reference key="1">
    <citation type="journal article" date="1997" name="Microbiology">
        <title>Sequencing of regions downstream of addA (98 degrees) and citG (289 degrees) in Bacillus subtilis.</title>
        <authorList>
            <person name="Medina N."/>
            <person name="Vannier F."/>
            <person name="Roche B."/>
            <person name="Autret S."/>
            <person name="Levine A."/>
            <person name="Seror S.J."/>
        </authorList>
    </citation>
    <scope>NUCLEOTIDE SEQUENCE [GENOMIC DNA]</scope>
    <source>
        <strain>168</strain>
    </source>
</reference>
<reference key="2">
    <citation type="journal article" date="1997" name="Microbiology">
        <title>A 10.3 kbp segment from nprB to argJ at the 102 degrees region of the Bacillus subtilis chromosome.</title>
        <authorList>
            <person name="Levine A."/>
            <person name="Vannier F."/>
            <person name="Roche B."/>
            <person name="Autret S."/>
            <person name="Mavel D."/>
            <person name="Seror S.J."/>
        </authorList>
    </citation>
    <scope>NUCLEOTIDE SEQUENCE [GENOMIC DNA]</scope>
    <source>
        <strain>168</strain>
    </source>
</reference>
<reference key="3">
    <citation type="journal article" date="1997" name="Nature">
        <title>The complete genome sequence of the Gram-positive bacterium Bacillus subtilis.</title>
        <authorList>
            <person name="Kunst F."/>
            <person name="Ogasawara N."/>
            <person name="Moszer I."/>
            <person name="Albertini A.M."/>
            <person name="Alloni G."/>
            <person name="Azevedo V."/>
            <person name="Bertero M.G."/>
            <person name="Bessieres P."/>
            <person name="Bolotin A."/>
            <person name="Borchert S."/>
            <person name="Borriss R."/>
            <person name="Boursier L."/>
            <person name="Brans A."/>
            <person name="Braun M."/>
            <person name="Brignell S.C."/>
            <person name="Bron S."/>
            <person name="Brouillet S."/>
            <person name="Bruschi C.V."/>
            <person name="Caldwell B."/>
            <person name="Capuano V."/>
            <person name="Carter N.M."/>
            <person name="Choi S.-K."/>
            <person name="Codani J.-J."/>
            <person name="Connerton I.F."/>
            <person name="Cummings N.J."/>
            <person name="Daniel R.A."/>
            <person name="Denizot F."/>
            <person name="Devine K.M."/>
            <person name="Duesterhoeft A."/>
            <person name="Ehrlich S.D."/>
            <person name="Emmerson P.T."/>
            <person name="Entian K.-D."/>
            <person name="Errington J."/>
            <person name="Fabret C."/>
            <person name="Ferrari E."/>
            <person name="Foulger D."/>
            <person name="Fritz C."/>
            <person name="Fujita M."/>
            <person name="Fujita Y."/>
            <person name="Fuma S."/>
            <person name="Galizzi A."/>
            <person name="Galleron N."/>
            <person name="Ghim S.-Y."/>
            <person name="Glaser P."/>
            <person name="Goffeau A."/>
            <person name="Golightly E.J."/>
            <person name="Grandi G."/>
            <person name="Guiseppi G."/>
            <person name="Guy B.J."/>
            <person name="Haga K."/>
            <person name="Haiech J."/>
            <person name="Harwood C.R."/>
            <person name="Henaut A."/>
            <person name="Hilbert H."/>
            <person name="Holsappel S."/>
            <person name="Hosono S."/>
            <person name="Hullo M.-F."/>
            <person name="Itaya M."/>
            <person name="Jones L.-M."/>
            <person name="Joris B."/>
            <person name="Karamata D."/>
            <person name="Kasahara Y."/>
            <person name="Klaerr-Blanchard M."/>
            <person name="Klein C."/>
            <person name="Kobayashi Y."/>
            <person name="Koetter P."/>
            <person name="Koningstein G."/>
            <person name="Krogh S."/>
            <person name="Kumano M."/>
            <person name="Kurita K."/>
            <person name="Lapidus A."/>
            <person name="Lardinois S."/>
            <person name="Lauber J."/>
            <person name="Lazarevic V."/>
            <person name="Lee S.-M."/>
            <person name="Levine A."/>
            <person name="Liu H."/>
            <person name="Masuda S."/>
            <person name="Mauel C."/>
            <person name="Medigue C."/>
            <person name="Medina N."/>
            <person name="Mellado R.P."/>
            <person name="Mizuno M."/>
            <person name="Moestl D."/>
            <person name="Nakai S."/>
            <person name="Noback M."/>
            <person name="Noone D."/>
            <person name="O'Reilly M."/>
            <person name="Ogawa K."/>
            <person name="Ogiwara A."/>
            <person name="Oudega B."/>
            <person name="Park S.-H."/>
            <person name="Parro V."/>
            <person name="Pohl T.M."/>
            <person name="Portetelle D."/>
            <person name="Porwollik S."/>
            <person name="Prescott A.M."/>
            <person name="Presecan E."/>
            <person name="Pujic P."/>
            <person name="Purnelle B."/>
            <person name="Rapoport G."/>
            <person name="Rey M."/>
            <person name="Reynolds S."/>
            <person name="Rieger M."/>
            <person name="Rivolta C."/>
            <person name="Rocha E."/>
            <person name="Roche B."/>
            <person name="Rose M."/>
            <person name="Sadaie Y."/>
            <person name="Sato T."/>
            <person name="Scanlan E."/>
            <person name="Schleich S."/>
            <person name="Schroeter R."/>
            <person name="Scoffone F."/>
            <person name="Sekiguchi J."/>
            <person name="Sekowska A."/>
            <person name="Seror S.J."/>
            <person name="Serror P."/>
            <person name="Shin B.-S."/>
            <person name="Soldo B."/>
            <person name="Sorokin A."/>
            <person name="Tacconi E."/>
            <person name="Takagi T."/>
            <person name="Takahashi H."/>
            <person name="Takemaru K."/>
            <person name="Takeuchi M."/>
            <person name="Tamakoshi A."/>
            <person name="Tanaka T."/>
            <person name="Terpstra P."/>
            <person name="Tognoni A."/>
            <person name="Tosato V."/>
            <person name="Uchiyama S."/>
            <person name="Vandenbol M."/>
            <person name="Vannier F."/>
            <person name="Vassarotti A."/>
            <person name="Viari A."/>
            <person name="Wambutt R."/>
            <person name="Wedler E."/>
            <person name="Wedler H."/>
            <person name="Weitzenegger T."/>
            <person name="Winters P."/>
            <person name="Wipat A."/>
            <person name="Yamamoto H."/>
            <person name="Yamane K."/>
            <person name="Yasumoto K."/>
            <person name="Yata K."/>
            <person name="Yoshida K."/>
            <person name="Yoshikawa H.-F."/>
            <person name="Zumstein E."/>
            <person name="Yoshikawa H."/>
            <person name="Danchin A."/>
        </authorList>
    </citation>
    <scope>NUCLEOTIDE SEQUENCE [LARGE SCALE GENOMIC DNA]</scope>
    <source>
        <strain>168</strain>
    </source>
</reference>
<reference key="4">
    <citation type="journal article" date="2015" name="ChemBioChem">
        <title>Catalysis of an essential step in Vitamin B2 biosynthesis by a consortium of broad spectrum hydrolases.</title>
        <authorList>
            <person name="Sarge S."/>
            <person name="Haase I."/>
            <person name="Illarionov B."/>
            <person name="Laudert D."/>
            <person name="Hohmann H.P."/>
            <person name="Bacher A."/>
            <person name="Fischer M."/>
        </authorList>
    </citation>
    <scope>FUNCTION</scope>
    <scope>CATALYTIC ACTIVITY</scope>
    <scope>BIOPHYSICOCHEMICAL PROPERTIES</scope>
    <scope>COFACTOR</scope>
    <scope>PATHWAY</scope>
    <scope>IDENTIFICATION BY MASS SPECTROMETRY</scope>
</reference>
<name>YITU_BACSU</name>
<gene>
    <name type="primary">yitU</name>
    <name type="ordered locus">BSU11140</name>
</gene>
<dbReference type="EC" id="3.1.3.104" evidence="2"/>
<dbReference type="EMBL" id="Y09476">
    <property type="protein sequence ID" value="CAA70632.1"/>
    <property type="molecule type" value="Genomic_DNA"/>
</dbReference>
<dbReference type="EMBL" id="Z79580">
    <property type="protein sequence ID" value="CAB01836.1"/>
    <property type="molecule type" value="Genomic_DNA"/>
</dbReference>
<dbReference type="EMBL" id="AL009126">
    <property type="protein sequence ID" value="CAB12954.1"/>
    <property type="molecule type" value="Genomic_DNA"/>
</dbReference>
<dbReference type="PIR" id="F69841">
    <property type="entry name" value="F69841"/>
</dbReference>
<dbReference type="RefSeq" id="WP_003233007.1">
    <property type="nucleotide sequence ID" value="NZ_OZ025638.1"/>
</dbReference>
<dbReference type="SMR" id="P70947"/>
<dbReference type="FunCoup" id="P70947">
    <property type="interactions" value="167"/>
</dbReference>
<dbReference type="STRING" id="224308.BSU11140"/>
<dbReference type="PaxDb" id="224308-BSU11140"/>
<dbReference type="EnsemblBacteria" id="CAB12954">
    <property type="protein sequence ID" value="CAB12954"/>
    <property type="gene ID" value="BSU_11140"/>
</dbReference>
<dbReference type="GeneID" id="939795"/>
<dbReference type="KEGG" id="bsu:BSU11140"/>
<dbReference type="PATRIC" id="fig|224308.179.peg.1198"/>
<dbReference type="eggNOG" id="COG0561">
    <property type="taxonomic scope" value="Bacteria"/>
</dbReference>
<dbReference type="InParanoid" id="P70947"/>
<dbReference type="OrthoDB" id="9781413at2"/>
<dbReference type="PhylomeDB" id="P70947"/>
<dbReference type="BioCyc" id="BSUB:BSU11140-MONOMER"/>
<dbReference type="BRENDA" id="3.1.3.104">
    <property type="organism ID" value="658"/>
</dbReference>
<dbReference type="SABIO-RK" id="P70947"/>
<dbReference type="UniPathway" id="UPA00275">
    <property type="reaction ID" value="UER00403"/>
</dbReference>
<dbReference type="Proteomes" id="UP000001570">
    <property type="component" value="Chromosome"/>
</dbReference>
<dbReference type="GO" id="GO:0005829">
    <property type="term" value="C:cytosol"/>
    <property type="evidence" value="ECO:0000318"/>
    <property type="project" value="GO_Central"/>
</dbReference>
<dbReference type="GO" id="GO:0043726">
    <property type="term" value="F:5-amino-6-(5-phosphoribitylamino)uracil phosphatase activity"/>
    <property type="evidence" value="ECO:0007669"/>
    <property type="project" value="UniProtKB-EC"/>
</dbReference>
<dbReference type="GO" id="GO:0000287">
    <property type="term" value="F:magnesium ion binding"/>
    <property type="evidence" value="ECO:0000318"/>
    <property type="project" value="GO_Central"/>
</dbReference>
<dbReference type="GO" id="GO:0016791">
    <property type="term" value="F:phosphatase activity"/>
    <property type="evidence" value="ECO:0000318"/>
    <property type="project" value="GO_Central"/>
</dbReference>
<dbReference type="GO" id="GO:0009231">
    <property type="term" value="P:riboflavin biosynthetic process"/>
    <property type="evidence" value="ECO:0007669"/>
    <property type="project" value="UniProtKB-UniPathway"/>
</dbReference>
<dbReference type="CDD" id="cd07516">
    <property type="entry name" value="HAD_Pase"/>
    <property type="match status" value="1"/>
</dbReference>
<dbReference type="FunFam" id="3.30.1240.10:FF:000042">
    <property type="entry name" value="5-amino-6-(5-phospho-D-ribitylamino)uracil phosphatase YitU"/>
    <property type="match status" value="1"/>
</dbReference>
<dbReference type="Gene3D" id="3.30.1240.10">
    <property type="match status" value="1"/>
</dbReference>
<dbReference type="Gene3D" id="3.40.50.1000">
    <property type="entry name" value="HAD superfamily/HAD-like"/>
    <property type="match status" value="1"/>
</dbReference>
<dbReference type="InterPro" id="IPR000150">
    <property type="entry name" value="Cof"/>
</dbReference>
<dbReference type="InterPro" id="IPR036412">
    <property type="entry name" value="HAD-like_sf"/>
</dbReference>
<dbReference type="InterPro" id="IPR006379">
    <property type="entry name" value="HAD-SF_hydro_IIB"/>
</dbReference>
<dbReference type="InterPro" id="IPR023214">
    <property type="entry name" value="HAD_sf"/>
</dbReference>
<dbReference type="NCBIfam" id="TIGR00099">
    <property type="entry name" value="Cof-subfamily"/>
    <property type="match status" value="1"/>
</dbReference>
<dbReference type="NCBIfam" id="TIGR01484">
    <property type="entry name" value="HAD-SF-IIB"/>
    <property type="match status" value="1"/>
</dbReference>
<dbReference type="PANTHER" id="PTHR10000:SF23">
    <property type="entry name" value="5-AMINO-6-(5-PHOSPHO-D-RIBITYLAMINO)URACIL PHOSPHATASE YITU"/>
    <property type="match status" value="1"/>
</dbReference>
<dbReference type="PANTHER" id="PTHR10000">
    <property type="entry name" value="PHOSPHOSERINE PHOSPHATASE"/>
    <property type="match status" value="1"/>
</dbReference>
<dbReference type="Pfam" id="PF08282">
    <property type="entry name" value="Hydrolase_3"/>
    <property type="match status" value="1"/>
</dbReference>
<dbReference type="SFLD" id="SFLDG01140">
    <property type="entry name" value="C2.B:_Phosphomannomutase_and_P"/>
    <property type="match status" value="1"/>
</dbReference>
<dbReference type="SFLD" id="SFLDS00003">
    <property type="entry name" value="Haloacid_Dehalogenase"/>
    <property type="match status" value="1"/>
</dbReference>
<dbReference type="SUPFAM" id="SSF56784">
    <property type="entry name" value="HAD-like"/>
    <property type="match status" value="1"/>
</dbReference>
<protein>
    <recommendedName>
        <fullName evidence="4">5-amino-6-(5-phospho-D-ribitylamino)uracil phosphatase YitU</fullName>
        <ecNumber evidence="2">3.1.3.104</ecNumber>
    </recommendedName>
</protein>
<sequence>METKPYLIALDLDGTLLKDDKTISENTLHTIQRLKDDGHYVCISTGRPYRSSSMYYQQMELTTPIVNFNGAFVHHPQDDSWGRYHTSLPLDVVKQLVDISESYNVHNVLAEVIDDVYFHYHDEHLIDAFNMNTTNVTVGDLRENLGEDVTSVLIHAKEEDVPAIRSYLSDVHAEVIDHRRWAAPWHVIEIIKSGMNKAVGLQKISDYYGVPRERIIAFGDEDNDLEMLEFAGCGVAMGNGIDAVKQIANRTTATNEEDGVARFLKEYFSL</sequence>
<evidence type="ECO:0000250" key="1"/>
<evidence type="ECO:0000269" key="2">
    <source>
    </source>
</evidence>
<evidence type="ECO:0000305" key="3"/>
<evidence type="ECO:0000305" key="4">
    <source>
    </source>
</evidence>
<keyword id="KW-0378">Hydrolase</keyword>
<keyword id="KW-0460">Magnesium</keyword>
<keyword id="KW-0479">Metal-binding</keyword>
<keyword id="KW-1185">Reference proteome</keyword>
<keyword id="KW-0686">Riboflavin biosynthesis</keyword>
<feature type="chain" id="PRO_0000359903" description="5-amino-6-(5-phospho-D-ribitylamino)uracil phosphatase YitU">
    <location>
        <begin position="1"/>
        <end position="270"/>
    </location>
</feature>
<feature type="active site" description="Nucleophile" evidence="1">
    <location>
        <position position="11"/>
    </location>
</feature>
<feature type="binding site" evidence="1">
    <location>
        <position position="11"/>
    </location>
    <ligand>
        <name>Mg(2+)</name>
        <dbReference type="ChEBI" id="CHEBI:18420"/>
    </ligand>
</feature>
<feature type="binding site" evidence="1">
    <location>
        <position position="12"/>
    </location>
    <ligand>
        <name>phosphate</name>
        <dbReference type="ChEBI" id="CHEBI:43474"/>
    </ligand>
</feature>
<feature type="binding site" evidence="1">
    <location>
        <position position="13"/>
    </location>
    <ligand>
        <name>Mg(2+)</name>
        <dbReference type="ChEBI" id="CHEBI:18420"/>
    </ligand>
</feature>
<feature type="binding site" evidence="1">
    <location>
        <begin position="45"/>
        <end position="46"/>
    </location>
    <ligand>
        <name>phosphate</name>
        <dbReference type="ChEBI" id="CHEBI:43474"/>
    </ligand>
</feature>
<feature type="binding site" evidence="1">
    <location>
        <position position="197"/>
    </location>
    <ligand>
        <name>phosphate</name>
        <dbReference type="ChEBI" id="CHEBI:43474"/>
    </ligand>
</feature>
<feature type="binding site" evidence="1">
    <location>
        <position position="220"/>
    </location>
    <ligand>
        <name>Mg(2+)</name>
        <dbReference type="ChEBI" id="CHEBI:18420"/>
    </ligand>
</feature>
<feature type="binding site" evidence="1">
    <location>
        <position position="223"/>
    </location>
    <ligand>
        <name>phosphate</name>
        <dbReference type="ChEBI" id="CHEBI:43474"/>
    </ligand>
</feature>
<proteinExistence type="evidence at protein level"/>
<comment type="function">
    <text evidence="2">Catalyzes the dephosphorylation of the riboflavin precursor 5-amino-6-(5-phospho-D-ribitylamino)uracil and of flavin mononucleotide (FMN) in vitro (PubMed:26316208).</text>
</comment>
<comment type="catalytic activity">
    <reaction evidence="2">
        <text>5-amino-6-(5-phospho-D-ribitylamino)uracil + H2O = 5-amino-6-(D-ribitylamino)uracil + phosphate</text>
        <dbReference type="Rhea" id="RHEA:25197"/>
        <dbReference type="ChEBI" id="CHEBI:15377"/>
        <dbReference type="ChEBI" id="CHEBI:15934"/>
        <dbReference type="ChEBI" id="CHEBI:43474"/>
        <dbReference type="ChEBI" id="CHEBI:58421"/>
        <dbReference type="EC" id="3.1.3.104"/>
    </reaction>
</comment>
<comment type="cofactor">
    <cofactor evidence="2">
        <name>Mg(2+)</name>
        <dbReference type="ChEBI" id="CHEBI:18420"/>
    </cofactor>
</comment>
<comment type="biophysicochemical properties">
    <kinetics>
        <KM evidence="2">81 uM for 5-amino-6-(5-phospho-D-ribitylamino)uracil</KM>
        <Vmax evidence="2">1.7 umol/min/mg enzyme with 5-amino-6-(5-phospho-D-ribitylamino)uracil as substrate</Vmax>
        <Vmax evidence="2">17.0 umol/min/mg enzyme with flavin mononucleotide</Vmax>
    </kinetics>
</comment>
<comment type="pathway">
    <text evidence="2">Cofactor biosynthesis; riboflavin biosynthesis; 5-amino-6-(D-ribitylamino)uracil from GTP: step 4/4.</text>
</comment>
<comment type="similarity">
    <text evidence="3">Belongs to the HAD-like hydrolase superfamily. Cof family.</text>
</comment>
<organism>
    <name type="scientific">Bacillus subtilis (strain 168)</name>
    <dbReference type="NCBI Taxonomy" id="224308"/>
    <lineage>
        <taxon>Bacteria</taxon>
        <taxon>Bacillati</taxon>
        <taxon>Bacillota</taxon>
        <taxon>Bacilli</taxon>
        <taxon>Bacillales</taxon>
        <taxon>Bacillaceae</taxon>
        <taxon>Bacillus</taxon>
    </lineage>
</organism>
<accession>P70947</accession>
<accession>O08140</accession>
<accession>Q796P8</accession>